<comment type="function">
    <text evidence="1">Digests double-stranded RNA. Involved in the processing of primary rRNA transcript to yield the immediate precursors to the large and small rRNAs (23S and 16S). Processes some mRNAs, and tRNAs when they are encoded in the rRNA operon. Processes pre-crRNA and tracrRNA of type II CRISPR loci if present in the organism.</text>
</comment>
<comment type="catalytic activity">
    <reaction evidence="1">
        <text>Endonucleolytic cleavage to 5'-phosphomonoester.</text>
        <dbReference type="EC" id="3.1.26.3"/>
    </reaction>
</comment>
<comment type="cofactor">
    <cofactor evidence="1">
        <name>Mg(2+)</name>
        <dbReference type="ChEBI" id="CHEBI:18420"/>
    </cofactor>
</comment>
<comment type="subunit">
    <text evidence="1">Homodimer.</text>
</comment>
<comment type="subcellular location">
    <subcellularLocation>
        <location evidence="1">Cytoplasm</location>
    </subcellularLocation>
</comment>
<comment type="similarity">
    <text evidence="1">Belongs to the ribonuclease III family.</text>
</comment>
<evidence type="ECO:0000255" key="1">
    <source>
        <dbReference type="HAMAP-Rule" id="MF_00104"/>
    </source>
</evidence>
<evidence type="ECO:0000256" key="2">
    <source>
        <dbReference type="SAM" id="MobiDB-lite"/>
    </source>
</evidence>
<name>RNC_PELTS</name>
<protein>
    <recommendedName>
        <fullName evidence="1">Ribonuclease 3</fullName>
        <ecNumber evidence="1">3.1.26.3</ecNumber>
    </recommendedName>
    <alternativeName>
        <fullName evidence="1">Ribonuclease III</fullName>
        <shortName evidence="1">RNase III</shortName>
    </alternativeName>
</protein>
<proteinExistence type="inferred from homology"/>
<accession>A5D1H6</accession>
<reference key="1">
    <citation type="journal article" date="2008" name="Genome Res.">
        <title>The genome of Pelotomaculum thermopropionicum reveals niche-associated evolution in anaerobic microbiota.</title>
        <authorList>
            <person name="Kosaka T."/>
            <person name="Kato S."/>
            <person name="Shimoyama T."/>
            <person name="Ishii S."/>
            <person name="Abe T."/>
            <person name="Watanabe K."/>
        </authorList>
    </citation>
    <scope>NUCLEOTIDE SEQUENCE [LARGE SCALE GENOMIC DNA]</scope>
    <source>
        <strain>DSM 13744 / JCM 10971 / SI</strain>
    </source>
</reference>
<organism>
    <name type="scientific">Pelotomaculum thermopropionicum (strain DSM 13744 / JCM 10971 / SI)</name>
    <dbReference type="NCBI Taxonomy" id="370438"/>
    <lineage>
        <taxon>Bacteria</taxon>
        <taxon>Bacillati</taxon>
        <taxon>Bacillota</taxon>
        <taxon>Clostridia</taxon>
        <taxon>Eubacteriales</taxon>
        <taxon>Desulfotomaculaceae</taxon>
        <taxon>Pelotomaculum</taxon>
    </lineage>
</organism>
<dbReference type="EC" id="3.1.26.3" evidence="1"/>
<dbReference type="EMBL" id="AP009389">
    <property type="protein sequence ID" value="BAF59919.1"/>
    <property type="molecule type" value="Genomic_DNA"/>
</dbReference>
<dbReference type="SMR" id="A5D1H6"/>
<dbReference type="STRING" id="370438.PTH_1738"/>
<dbReference type="KEGG" id="pth:PTH_1738"/>
<dbReference type="eggNOG" id="COG0571">
    <property type="taxonomic scope" value="Bacteria"/>
</dbReference>
<dbReference type="HOGENOM" id="CLU_000907_1_3_9"/>
<dbReference type="Proteomes" id="UP000006556">
    <property type="component" value="Chromosome"/>
</dbReference>
<dbReference type="GO" id="GO:0005737">
    <property type="term" value="C:cytoplasm"/>
    <property type="evidence" value="ECO:0007669"/>
    <property type="project" value="UniProtKB-SubCell"/>
</dbReference>
<dbReference type="GO" id="GO:0003725">
    <property type="term" value="F:double-stranded RNA binding"/>
    <property type="evidence" value="ECO:0007669"/>
    <property type="project" value="TreeGrafter"/>
</dbReference>
<dbReference type="GO" id="GO:0046872">
    <property type="term" value="F:metal ion binding"/>
    <property type="evidence" value="ECO:0007669"/>
    <property type="project" value="UniProtKB-KW"/>
</dbReference>
<dbReference type="GO" id="GO:0004525">
    <property type="term" value="F:ribonuclease III activity"/>
    <property type="evidence" value="ECO:0007669"/>
    <property type="project" value="UniProtKB-UniRule"/>
</dbReference>
<dbReference type="GO" id="GO:0019843">
    <property type="term" value="F:rRNA binding"/>
    <property type="evidence" value="ECO:0007669"/>
    <property type="project" value="UniProtKB-KW"/>
</dbReference>
<dbReference type="GO" id="GO:0006397">
    <property type="term" value="P:mRNA processing"/>
    <property type="evidence" value="ECO:0007669"/>
    <property type="project" value="UniProtKB-UniRule"/>
</dbReference>
<dbReference type="GO" id="GO:0010468">
    <property type="term" value="P:regulation of gene expression"/>
    <property type="evidence" value="ECO:0007669"/>
    <property type="project" value="TreeGrafter"/>
</dbReference>
<dbReference type="GO" id="GO:0006364">
    <property type="term" value="P:rRNA processing"/>
    <property type="evidence" value="ECO:0007669"/>
    <property type="project" value="UniProtKB-UniRule"/>
</dbReference>
<dbReference type="GO" id="GO:0008033">
    <property type="term" value="P:tRNA processing"/>
    <property type="evidence" value="ECO:0007669"/>
    <property type="project" value="UniProtKB-KW"/>
</dbReference>
<dbReference type="CDD" id="cd10845">
    <property type="entry name" value="DSRM_RNAse_III_family"/>
    <property type="match status" value="1"/>
</dbReference>
<dbReference type="CDD" id="cd00593">
    <property type="entry name" value="RIBOc"/>
    <property type="match status" value="1"/>
</dbReference>
<dbReference type="FunFam" id="1.10.1520.10:FF:000001">
    <property type="entry name" value="Ribonuclease 3"/>
    <property type="match status" value="1"/>
</dbReference>
<dbReference type="FunFam" id="3.30.160.20:FF:000003">
    <property type="entry name" value="Ribonuclease 3"/>
    <property type="match status" value="1"/>
</dbReference>
<dbReference type="Gene3D" id="3.30.160.20">
    <property type="match status" value="1"/>
</dbReference>
<dbReference type="Gene3D" id="1.10.1520.10">
    <property type="entry name" value="Ribonuclease III domain"/>
    <property type="match status" value="1"/>
</dbReference>
<dbReference type="HAMAP" id="MF_00104">
    <property type="entry name" value="RNase_III"/>
    <property type="match status" value="1"/>
</dbReference>
<dbReference type="InterPro" id="IPR014720">
    <property type="entry name" value="dsRBD_dom"/>
</dbReference>
<dbReference type="InterPro" id="IPR011907">
    <property type="entry name" value="RNase_III"/>
</dbReference>
<dbReference type="InterPro" id="IPR000999">
    <property type="entry name" value="RNase_III_dom"/>
</dbReference>
<dbReference type="InterPro" id="IPR036389">
    <property type="entry name" value="RNase_III_sf"/>
</dbReference>
<dbReference type="NCBIfam" id="TIGR02191">
    <property type="entry name" value="RNaseIII"/>
    <property type="match status" value="1"/>
</dbReference>
<dbReference type="PANTHER" id="PTHR11207:SF0">
    <property type="entry name" value="RIBONUCLEASE 3"/>
    <property type="match status" value="1"/>
</dbReference>
<dbReference type="PANTHER" id="PTHR11207">
    <property type="entry name" value="RIBONUCLEASE III"/>
    <property type="match status" value="1"/>
</dbReference>
<dbReference type="Pfam" id="PF00035">
    <property type="entry name" value="dsrm"/>
    <property type="match status" value="1"/>
</dbReference>
<dbReference type="Pfam" id="PF14622">
    <property type="entry name" value="Ribonucleas_3_3"/>
    <property type="match status" value="1"/>
</dbReference>
<dbReference type="SMART" id="SM00358">
    <property type="entry name" value="DSRM"/>
    <property type="match status" value="1"/>
</dbReference>
<dbReference type="SMART" id="SM00535">
    <property type="entry name" value="RIBOc"/>
    <property type="match status" value="1"/>
</dbReference>
<dbReference type="SUPFAM" id="SSF54768">
    <property type="entry name" value="dsRNA-binding domain-like"/>
    <property type="match status" value="1"/>
</dbReference>
<dbReference type="SUPFAM" id="SSF69065">
    <property type="entry name" value="RNase III domain-like"/>
    <property type="match status" value="1"/>
</dbReference>
<dbReference type="PROSITE" id="PS50137">
    <property type="entry name" value="DS_RBD"/>
    <property type="match status" value="1"/>
</dbReference>
<dbReference type="PROSITE" id="PS00517">
    <property type="entry name" value="RNASE_3_1"/>
    <property type="match status" value="1"/>
</dbReference>
<dbReference type="PROSITE" id="PS50142">
    <property type="entry name" value="RNASE_3_2"/>
    <property type="match status" value="1"/>
</dbReference>
<keyword id="KW-0963">Cytoplasm</keyword>
<keyword id="KW-0255">Endonuclease</keyword>
<keyword id="KW-0378">Hydrolase</keyword>
<keyword id="KW-0460">Magnesium</keyword>
<keyword id="KW-0479">Metal-binding</keyword>
<keyword id="KW-0507">mRNA processing</keyword>
<keyword id="KW-0540">Nuclease</keyword>
<keyword id="KW-1185">Reference proteome</keyword>
<keyword id="KW-0694">RNA-binding</keyword>
<keyword id="KW-0698">rRNA processing</keyword>
<keyword id="KW-0699">rRNA-binding</keyword>
<keyword id="KW-0819">tRNA processing</keyword>
<feature type="chain" id="PRO_1000075785" description="Ribonuclease 3">
    <location>
        <begin position="1"/>
        <end position="241"/>
    </location>
</feature>
<feature type="domain" description="RNase III" evidence="1">
    <location>
        <begin position="8"/>
        <end position="137"/>
    </location>
</feature>
<feature type="domain" description="DRBM" evidence="1">
    <location>
        <begin position="164"/>
        <end position="233"/>
    </location>
</feature>
<feature type="region of interest" description="Disordered" evidence="2">
    <location>
        <begin position="214"/>
        <end position="241"/>
    </location>
</feature>
<feature type="active site" evidence="1">
    <location>
        <position position="54"/>
    </location>
</feature>
<feature type="active site" evidence="1">
    <location>
        <position position="126"/>
    </location>
</feature>
<feature type="binding site" evidence="1">
    <location>
        <position position="50"/>
    </location>
    <ligand>
        <name>Mg(2+)</name>
        <dbReference type="ChEBI" id="CHEBI:18420"/>
    </ligand>
</feature>
<feature type="binding site" evidence="1">
    <location>
        <position position="123"/>
    </location>
    <ligand>
        <name>Mg(2+)</name>
        <dbReference type="ChEBI" id="CHEBI:18420"/>
    </ligand>
</feature>
<feature type="binding site" evidence="1">
    <location>
        <position position="126"/>
    </location>
    <ligand>
        <name>Mg(2+)</name>
        <dbReference type="ChEBI" id="CHEBI:18420"/>
    </ligand>
</feature>
<gene>
    <name evidence="1" type="primary">rnc</name>
    <name type="ordered locus">PTH_1738</name>
</gene>
<sequence length="241" mass="26680">MPDAQDKLTLLKNRLGIAWRDEGLLTRALTHSSFTYENRQNGLENNQRLEFLGDAVLELAVSDYLYRSKPEMDEGDLTKLRASVVCEPSLARVARELELGTCLYMGKGEERSGGRDRPSILADAFEALLGAVYLDQGLEKAAGLAIKYLAPLIGDVLEGRLERDYKTELQELVQQRGGEQVQYVILKEEGPDHHKSFTAGVLYRGVLVGQGTGRSKKEAEQQAAKKALMKSDLGSACNHKK</sequence>